<comment type="function">
    <text evidence="1">Catalyzes the irreversible beta-carboxylation of phosphoenolpyruvate (PEP) to form oxaloacetate (OAA), a four-carbon dicarboxylic acid source for the tricarboxylic acid cycle.</text>
</comment>
<comment type="catalytic activity">
    <reaction evidence="1">
        <text>oxaloacetate + phosphate = phosphoenolpyruvate + hydrogencarbonate</text>
        <dbReference type="Rhea" id="RHEA:28370"/>
        <dbReference type="ChEBI" id="CHEBI:16452"/>
        <dbReference type="ChEBI" id="CHEBI:17544"/>
        <dbReference type="ChEBI" id="CHEBI:43474"/>
        <dbReference type="ChEBI" id="CHEBI:58702"/>
        <dbReference type="EC" id="4.1.1.31"/>
    </reaction>
</comment>
<comment type="cofactor">
    <cofactor evidence="1">
        <name>Mg(2+)</name>
        <dbReference type="ChEBI" id="CHEBI:18420"/>
    </cofactor>
</comment>
<comment type="subunit">
    <text evidence="1">Homotetramer.</text>
</comment>
<comment type="similarity">
    <text evidence="1">Belongs to the PEPCase type 2 family.</text>
</comment>
<organism>
    <name type="scientific">Saccharolobus islandicus (strain M.16.27)</name>
    <name type="common">Sulfolobus islandicus</name>
    <dbReference type="NCBI Taxonomy" id="427318"/>
    <lineage>
        <taxon>Archaea</taxon>
        <taxon>Thermoproteota</taxon>
        <taxon>Thermoprotei</taxon>
        <taxon>Sulfolobales</taxon>
        <taxon>Sulfolobaceae</taxon>
        <taxon>Saccharolobus</taxon>
    </lineage>
</organism>
<proteinExistence type="inferred from homology"/>
<protein>
    <recommendedName>
        <fullName evidence="1">Phosphoenolpyruvate carboxylase</fullName>
        <shortName evidence="1">PEPC</shortName>
        <shortName evidence="1">PEPCase</shortName>
        <ecNumber evidence="1">4.1.1.31</ecNumber>
    </recommendedName>
</protein>
<gene>
    <name evidence="1" type="primary">ppcA</name>
    <name type="ordered locus">M1627_0069</name>
</gene>
<reference key="1">
    <citation type="journal article" date="2009" name="Proc. Natl. Acad. Sci. U.S.A.">
        <title>Biogeography of the Sulfolobus islandicus pan-genome.</title>
        <authorList>
            <person name="Reno M.L."/>
            <person name="Held N.L."/>
            <person name="Fields C.J."/>
            <person name="Burke P.V."/>
            <person name="Whitaker R.J."/>
        </authorList>
    </citation>
    <scope>NUCLEOTIDE SEQUENCE [LARGE SCALE GENOMIC DNA]</scope>
    <source>
        <strain>M.16.27</strain>
    </source>
</reference>
<accession>C3N0D7</accession>
<sequence length="511" mass="58806">MRIIPRTMSTQHPDNAKVPEWAKSEVIEGEDEVKEAFLAYSMYGVHEVMWDAEGKDVDTHVVRKLLSNYPDYFREHILGKDVFLTYRLPNPKVEGADRKVFAETMESIPITYDLAEKFYGNGITVPVFEVILPMTTSNLEIISVARYYEKAVANEDELELYNGVKVKDLVGEIYPKVIEVIPLVEDRDSLQNIDNIVEGYYKVIKPKYMRVFLARSDPAMNYGMITAVLSVKIALSELYKLSESLNFEIYPIIGVGSLPFRGHLSPENYEKVLEEYKGVYTYTIQSAFKYDYDYDKVKSAISSINNSRIGPAKILEKYEEDVLRKITILYTERYQPIIESLANAINDVSVLLPRRRARKLHIGLFGYSRSAGKVSLPRAISFVGSLYSIGIPPELIGISSLSNLDEKEWDIFKQNYVNFKHDLQTAARFFNWESFELIKDIWKISEDTIAKIKEDIDYAESVIGIKLGDIDYDSRKHILMSSLFLLSFKEKILQESKKYLYEMALIRRSLG</sequence>
<dbReference type="EC" id="4.1.1.31" evidence="1"/>
<dbReference type="EMBL" id="CP001401">
    <property type="protein sequence ID" value="ACP54098.1"/>
    <property type="molecule type" value="Genomic_DNA"/>
</dbReference>
<dbReference type="RefSeq" id="WP_012710248.1">
    <property type="nucleotide sequence ID" value="NC_012632.1"/>
</dbReference>
<dbReference type="SMR" id="C3N0D7"/>
<dbReference type="GeneID" id="84060555"/>
<dbReference type="KEGG" id="sim:M1627_0069"/>
<dbReference type="HOGENOM" id="CLU_517433_0_0_2"/>
<dbReference type="Proteomes" id="UP000002307">
    <property type="component" value="Chromosome"/>
</dbReference>
<dbReference type="GO" id="GO:0000287">
    <property type="term" value="F:magnesium ion binding"/>
    <property type="evidence" value="ECO:0007669"/>
    <property type="project" value="UniProtKB-UniRule"/>
</dbReference>
<dbReference type="GO" id="GO:0008964">
    <property type="term" value="F:phosphoenolpyruvate carboxylase activity"/>
    <property type="evidence" value="ECO:0007669"/>
    <property type="project" value="UniProtKB-UniRule"/>
</dbReference>
<dbReference type="GO" id="GO:0015977">
    <property type="term" value="P:carbon fixation"/>
    <property type="evidence" value="ECO:0007669"/>
    <property type="project" value="UniProtKB-UniRule"/>
</dbReference>
<dbReference type="GO" id="GO:0006107">
    <property type="term" value="P:oxaloacetate metabolic process"/>
    <property type="evidence" value="ECO:0007669"/>
    <property type="project" value="UniProtKB-UniRule"/>
</dbReference>
<dbReference type="GO" id="GO:0006099">
    <property type="term" value="P:tricarboxylic acid cycle"/>
    <property type="evidence" value="ECO:0007669"/>
    <property type="project" value="InterPro"/>
</dbReference>
<dbReference type="HAMAP" id="MF_01904">
    <property type="entry name" value="PEPcase_type2"/>
    <property type="match status" value="1"/>
</dbReference>
<dbReference type="InterPro" id="IPR007566">
    <property type="entry name" value="PEP_COase_arc-type"/>
</dbReference>
<dbReference type="InterPro" id="IPR015813">
    <property type="entry name" value="Pyrv/PenolPyrv_kinase-like_dom"/>
</dbReference>
<dbReference type="NCBIfam" id="TIGR02751">
    <property type="entry name" value="PEPCase_arch"/>
    <property type="match status" value="1"/>
</dbReference>
<dbReference type="Pfam" id="PF14010">
    <property type="entry name" value="PEPcase_2"/>
    <property type="match status" value="1"/>
</dbReference>
<dbReference type="PIRSF" id="PIRSF006677">
    <property type="entry name" value="UCP006677"/>
    <property type="match status" value="1"/>
</dbReference>
<dbReference type="SUPFAM" id="SSF51621">
    <property type="entry name" value="Phosphoenolpyruvate/pyruvate domain"/>
    <property type="match status" value="1"/>
</dbReference>
<feature type="chain" id="PRO_1000216171" description="Phosphoenolpyruvate carboxylase">
    <location>
        <begin position="1"/>
        <end position="511"/>
    </location>
</feature>
<name>CAPPA_SACI3</name>
<evidence type="ECO:0000255" key="1">
    <source>
        <dbReference type="HAMAP-Rule" id="MF_01904"/>
    </source>
</evidence>
<keyword id="KW-0120">Carbon dioxide fixation</keyword>
<keyword id="KW-0456">Lyase</keyword>
<keyword id="KW-0460">Magnesium</keyword>